<organism>
    <name type="scientific">Salmonella dublin (strain CT_02021853)</name>
    <dbReference type="NCBI Taxonomy" id="439851"/>
    <lineage>
        <taxon>Bacteria</taxon>
        <taxon>Pseudomonadati</taxon>
        <taxon>Pseudomonadota</taxon>
        <taxon>Gammaproteobacteria</taxon>
        <taxon>Enterobacterales</taxon>
        <taxon>Enterobacteriaceae</taxon>
        <taxon>Salmonella</taxon>
    </lineage>
</organism>
<feature type="chain" id="PRO_1000100056" description="Dihydroorotase">
    <location>
        <begin position="1"/>
        <end position="348"/>
    </location>
</feature>
<feature type="active site" evidence="1">
    <location>
        <position position="251"/>
    </location>
</feature>
<feature type="binding site" evidence="1">
    <location>
        <position position="17"/>
    </location>
    <ligand>
        <name>Zn(2+)</name>
        <dbReference type="ChEBI" id="CHEBI:29105"/>
        <label>1</label>
    </ligand>
</feature>
<feature type="binding site" evidence="1">
    <location>
        <begin position="19"/>
        <end position="21"/>
    </location>
    <ligand>
        <name>substrate</name>
    </ligand>
</feature>
<feature type="binding site" evidence="1">
    <location>
        <position position="19"/>
    </location>
    <ligand>
        <name>Zn(2+)</name>
        <dbReference type="ChEBI" id="CHEBI:29105"/>
        <label>1</label>
    </ligand>
</feature>
<feature type="binding site" evidence="1">
    <location>
        <position position="45"/>
    </location>
    <ligand>
        <name>substrate</name>
    </ligand>
</feature>
<feature type="binding site" description="via carbamate group" evidence="1">
    <location>
        <position position="103"/>
    </location>
    <ligand>
        <name>Zn(2+)</name>
        <dbReference type="ChEBI" id="CHEBI:29105"/>
        <label>1</label>
    </ligand>
</feature>
<feature type="binding site" description="via carbamate group" evidence="1">
    <location>
        <position position="103"/>
    </location>
    <ligand>
        <name>Zn(2+)</name>
        <dbReference type="ChEBI" id="CHEBI:29105"/>
        <label>2</label>
    </ligand>
</feature>
<feature type="binding site" evidence="1">
    <location>
        <position position="140"/>
    </location>
    <ligand>
        <name>substrate</name>
    </ligand>
</feature>
<feature type="binding site" evidence="1">
    <location>
        <position position="140"/>
    </location>
    <ligand>
        <name>Zn(2+)</name>
        <dbReference type="ChEBI" id="CHEBI:29105"/>
        <label>2</label>
    </ligand>
</feature>
<feature type="binding site" evidence="1">
    <location>
        <position position="178"/>
    </location>
    <ligand>
        <name>Zn(2+)</name>
        <dbReference type="ChEBI" id="CHEBI:29105"/>
        <label>2</label>
    </ligand>
</feature>
<feature type="binding site" evidence="1">
    <location>
        <position position="223"/>
    </location>
    <ligand>
        <name>substrate</name>
    </ligand>
</feature>
<feature type="binding site" evidence="1">
    <location>
        <position position="251"/>
    </location>
    <ligand>
        <name>Zn(2+)</name>
        <dbReference type="ChEBI" id="CHEBI:29105"/>
        <label>1</label>
    </ligand>
</feature>
<feature type="binding site" evidence="1">
    <location>
        <position position="255"/>
    </location>
    <ligand>
        <name>substrate</name>
    </ligand>
</feature>
<feature type="binding site" evidence="1">
    <location>
        <position position="267"/>
    </location>
    <ligand>
        <name>substrate</name>
    </ligand>
</feature>
<feature type="modified residue" description="N6-carboxylysine" evidence="1">
    <location>
        <position position="103"/>
    </location>
</feature>
<comment type="function">
    <text evidence="1">Catalyzes the reversible cyclization of carbamoyl aspartate to dihydroorotate.</text>
</comment>
<comment type="catalytic activity">
    <reaction evidence="1">
        <text>(S)-dihydroorotate + H2O = N-carbamoyl-L-aspartate + H(+)</text>
        <dbReference type="Rhea" id="RHEA:24296"/>
        <dbReference type="ChEBI" id="CHEBI:15377"/>
        <dbReference type="ChEBI" id="CHEBI:15378"/>
        <dbReference type="ChEBI" id="CHEBI:30864"/>
        <dbReference type="ChEBI" id="CHEBI:32814"/>
        <dbReference type="EC" id="3.5.2.3"/>
    </reaction>
</comment>
<comment type="cofactor">
    <cofactor evidence="1">
        <name>Zn(2+)</name>
        <dbReference type="ChEBI" id="CHEBI:29105"/>
    </cofactor>
    <text evidence="1">Binds 2 Zn(2+) ions per subunit.</text>
</comment>
<comment type="pathway">
    <text evidence="1">Pyrimidine metabolism; UMP biosynthesis via de novo pathway; (S)-dihydroorotate from bicarbonate: step 3/3.</text>
</comment>
<comment type="subunit">
    <text evidence="1">Homodimer.</text>
</comment>
<comment type="similarity">
    <text evidence="1">Belongs to the metallo-dependent hydrolases superfamily. DHOase family. Class II DHOase subfamily.</text>
</comment>
<gene>
    <name evidence="1" type="primary">pyrC</name>
    <name type="ordered locus">SeD_A2209</name>
</gene>
<keyword id="KW-0378">Hydrolase</keyword>
<keyword id="KW-0479">Metal-binding</keyword>
<keyword id="KW-0665">Pyrimidine biosynthesis</keyword>
<keyword id="KW-0862">Zinc</keyword>
<accession>B5FL01</accession>
<dbReference type="EC" id="3.5.2.3" evidence="1"/>
<dbReference type="EMBL" id="CP001144">
    <property type="protein sequence ID" value="ACH76507.1"/>
    <property type="molecule type" value="Genomic_DNA"/>
</dbReference>
<dbReference type="RefSeq" id="WP_000126602.1">
    <property type="nucleotide sequence ID" value="NC_011205.1"/>
</dbReference>
<dbReference type="SMR" id="B5FL01"/>
<dbReference type="MEROPS" id="M38.A02"/>
<dbReference type="KEGG" id="sed:SeD_A2209"/>
<dbReference type="HOGENOM" id="CLU_041558_1_0_6"/>
<dbReference type="UniPathway" id="UPA00070">
    <property type="reaction ID" value="UER00117"/>
</dbReference>
<dbReference type="Proteomes" id="UP000008322">
    <property type="component" value="Chromosome"/>
</dbReference>
<dbReference type="GO" id="GO:0005829">
    <property type="term" value="C:cytosol"/>
    <property type="evidence" value="ECO:0007669"/>
    <property type="project" value="TreeGrafter"/>
</dbReference>
<dbReference type="GO" id="GO:0004151">
    <property type="term" value="F:dihydroorotase activity"/>
    <property type="evidence" value="ECO:0007669"/>
    <property type="project" value="UniProtKB-UniRule"/>
</dbReference>
<dbReference type="GO" id="GO:0008270">
    <property type="term" value="F:zinc ion binding"/>
    <property type="evidence" value="ECO:0007669"/>
    <property type="project" value="UniProtKB-UniRule"/>
</dbReference>
<dbReference type="GO" id="GO:0006207">
    <property type="term" value="P:'de novo' pyrimidine nucleobase biosynthetic process"/>
    <property type="evidence" value="ECO:0007669"/>
    <property type="project" value="TreeGrafter"/>
</dbReference>
<dbReference type="GO" id="GO:0044205">
    <property type="term" value="P:'de novo' UMP biosynthetic process"/>
    <property type="evidence" value="ECO:0007669"/>
    <property type="project" value="UniProtKB-UniRule"/>
</dbReference>
<dbReference type="CDD" id="cd01294">
    <property type="entry name" value="DHOase"/>
    <property type="match status" value="1"/>
</dbReference>
<dbReference type="FunFam" id="3.20.20.140:FF:000006">
    <property type="entry name" value="Dihydroorotase"/>
    <property type="match status" value="1"/>
</dbReference>
<dbReference type="Gene3D" id="3.20.20.140">
    <property type="entry name" value="Metal-dependent hydrolases"/>
    <property type="match status" value="1"/>
</dbReference>
<dbReference type="HAMAP" id="MF_00219">
    <property type="entry name" value="PyrC_classII"/>
    <property type="match status" value="1"/>
</dbReference>
<dbReference type="InterPro" id="IPR006680">
    <property type="entry name" value="Amidohydro-rel"/>
</dbReference>
<dbReference type="InterPro" id="IPR004721">
    <property type="entry name" value="DHOdimr"/>
</dbReference>
<dbReference type="InterPro" id="IPR002195">
    <property type="entry name" value="Dihydroorotase_CS"/>
</dbReference>
<dbReference type="InterPro" id="IPR032466">
    <property type="entry name" value="Metal_Hydrolase"/>
</dbReference>
<dbReference type="NCBIfam" id="TIGR00856">
    <property type="entry name" value="pyrC_dimer"/>
    <property type="match status" value="1"/>
</dbReference>
<dbReference type="PANTHER" id="PTHR43137">
    <property type="entry name" value="DIHYDROOROTASE"/>
    <property type="match status" value="1"/>
</dbReference>
<dbReference type="PANTHER" id="PTHR43137:SF1">
    <property type="entry name" value="DIHYDROOROTASE"/>
    <property type="match status" value="1"/>
</dbReference>
<dbReference type="Pfam" id="PF01979">
    <property type="entry name" value="Amidohydro_1"/>
    <property type="match status" value="1"/>
</dbReference>
<dbReference type="PIRSF" id="PIRSF001237">
    <property type="entry name" value="DHOdimr"/>
    <property type="match status" value="1"/>
</dbReference>
<dbReference type="SUPFAM" id="SSF51556">
    <property type="entry name" value="Metallo-dependent hydrolases"/>
    <property type="match status" value="1"/>
</dbReference>
<dbReference type="PROSITE" id="PS00482">
    <property type="entry name" value="DIHYDROOROTASE_1"/>
    <property type="match status" value="1"/>
</dbReference>
<dbReference type="PROSITE" id="PS00483">
    <property type="entry name" value="DIHYDROOROTASE_2"/>
    <property type="match status" value="1"/>
</dbReference>
<sequence length="348" mass="38633">MTAPSQVLKIRRPDDWHVHLRDGDMLKTVVPYTSEIYGRAIVMPNLASPITTVDAAIAYRQRILDAVPAGHDFTPLMTCYLTDSLDADELERGFHEGVFTAAKLYPANATTNSSHGVTSVDAIMPVLERMEKLGMPLLVHGEVTHAEVDIFDREARFIDTVMEPLRQRLTALKVVFEHITTKDAAQYVRDGNDYLAATITPQHLMFNRNDMLVGGIRPHLYCLPILKRNIHQQALRELVASGFTRAFLGTDSAPHSRHRKETSCGCAGCFNAPSALGSYAAVFEEMNALAHFEAFCSLNGPQFYGLPVNAGWVELVRDEQQVPENIALADDSLVPFLAGETVRWSVKK</sequence>
<proteinExistence type="inferred from homology"/>
<evidence type="ECO:0000255" key="1">
    <source>
        <dbReference type="HAMAP-Rule" id="MF_00219"/>
    </source>
</evidence>
<name>PYRC_SALDC</name>
<protein>
    <recommendedName>
        <fullName evidence="1">Dihydroorotase</fullName>
        <shortName evidence="1">DHOase</shortName>
        <ecNumber evidence="1">3.5.2.3</ecNumber>
    </recommendedName>
</protein>
<reference key="1">
    <citation type="journal article" date="2011" name="J. Bacteriol.">
        <title>Comparative genomics of 28 Salmonella enterica isolates: evidence for CRISPR-mediated adaptive sublineage evolution.</title>
        <authorList>
            <person name="Fricke W.F."/>
            <person name="Mammel M.K."/>
            <person name="McDermott P.F."/>
            <person name="Tartera C."/>
            <person name="White D.G."/>
            <person name="Leclerc J.E."/>
            <person name="Ravel J."/>
            <person name="Cebula T.A."/>
        </authorList>
    </citation>
    <scope>NUCLEOTIDE SEQUENCE [LARGE SCALE GENOMIC DNA]</scope>
    <source>
        <strain>CT_02021853</strain>
    </source>
</reference>